<sequence>MCQNLGKFEIVVSHYRRVKAMNVIVDLCVVPLGVGVSVGQYVAACQKVLAEAGLKHTMHAYGTNIEGDWDEVFAAVKACHEAVHALGAPRITSSMRFGTRTDRPQTMDEKVKSVETWLENS</sequence>
<dbReference type="EMBL" id="BA000022">
    <property type="protein sequence ID" value="BAA16706.1"/>
    <property type="molecule type" value="Genomic_DNA"/>
</dbReference>
<dbReference type="PIR" id="S74554">
    <property type="entry name" value="S74554"/>
</dbReference>
<dbReference type="SMR" id="P72699"/>
<dbReference type="FunCoup" id="P72699">
    <property type="interactions" value="7"/>
</dbReference>
<dbReference type="IntAct" id="P72699">
    <property type="interactions" value="1"/>
</dbReference>
<dbReference type="PaxDb" id="1148-1651779"/>
<dbReference type="EnsemblBacteria" id="BAA16706">
    <property type="protein sequence ID" value="BAA16706"/>
    <property type="gene ID" value="BAA16706"/>
</dbReference>
<dbReference type="KEGG" id="syn:sll0230"/>
<dbReference type="eggNOG" id="COG0011">
    <property type="taxonomic scope" value="Bacteria"/>
</dbReference>
<dbReference type="InParanoid" id="P72699"/>
<dbReference type="PhylomeDB" id="P72699"/>
<dbReference type="Proteomes" id="UP000001425">
    <property type="component" value="Chromosome"/>
</dbReference>
<dbReference type="Gene3D" id="3.30.70.930">
    <property type="match status" value="1"/>
</dbReference>
<dbReference type="InterPro" id="IPR029756">
    <property type="entry name" value="MTH1187/YkoF-like"/>
</dbReference>
<dbReference type="InterPro" id="IPR002767">
    <property type="entry name" value="Thiamine_BP"/>
</dbReference>
<dbReference type="InterPro" id="IPR051614">
    <property type="entry name" value="UPF0045_domain"/>
</dbReference>
<dbReference type="NCBIfam" id="TIGR00106">
    <property type="entry name" value="MTH1187 family thiamine-binding protein"/>
    <property type="match status" value="1"/>
</dbReference>
<dbReference type="PANTHER" id="PTHR33777">
    <property type="entry name" value="UPF0045 PROTEIN ECM15"/>
    <property type="match status" value="1"/>
</dbReference>
<dbReference type="PANTHER" id="PTHR33777:SF1">
    <property type="entry name" value="UPF0045 PROTEIN ECM15"/>
    <property type="match status" value="1"/>
</dbReference>
<dbReference type="Pfam" id="PF01910">
    <property type="entry name" value="Thiamine_BP"/>
    <property type="match status" value="1"/>
</dbReference>
<dbReference type="SUPFAM" id="SSF89957">
    <property type="entry name" value="MTH1187/YkoF-like"/>
    <property type="match status" value="1"/>
</dbReference>
<name>Y230_SYNY3</name>
<proteinExistence type="evidence at protein level"/>
<protein>
    <recommendedName>
        <fullName>UPF0045 protein sll0230</fullName>
    </recommendedName>
</protein>
<accession>P72699</accession>
<gene>
    <name type="ordered locus">sll0230</name>
</gene>
<organism>
    <name type="scientific">Synechocystis sp. (strain ATCC 27184 / PCC 6803 / Kazusa)</name>
    <dbReference type="NCBI Taxonomy" id="1111708"/>
    <lineage>
        <taxon>Bacteria</taxon>
        <taxon>Bacillati</taxon>
        <taxon>Cyanobacteriota</taxon>
        <taxon>Cyanophyceae</taxon>
        <taxon>Synechococcales</taxon>
        <taxon>Merismopediaceae</taxon>
        <taxon>Synechocystis</taxon>
    </lineage>
</organism>
<keyword id="KW-0903">Direct protein sequencing</keyword>
<keyword id="KW-1185">Reference proteome</keyword>
<reference key="1">
    <citation type="journal article" date="1996" name="DNA Res.">
        <title>Sequence analysis of the genome of the unicellular cyanobacterium Synechocystis sp. strain PCC6803. II. Sequence determination of the entire genome and assignment of potential protein-coding regions.</title>
        <authorList>
            <person name="Kaneko T."/>
            <person name="Sato S."/>
            <person name="Kotani H."/>
            <person name="Tanaka A."/>
            <person name="Asamizu E."/>
            <person name="Nakamura Y."/>
            <person name="Miyajima N."/>
            <person name="Hirosawa M."/>
            <person name="Sugiura M."/>
            <person name="Sasamoto S."/>
            <person name="Kimura T."/>
            <person name="Hosouchi T."/>
            <person name="Matsuno A."/>
            <person name="Muraki A."/>
            <person name="Nakazaki N."/>
            <person name="Naruo K."/>
            <person name="Okumura S."/>
            <person name="Shimpo S."/>
            <person name="Takeuchi C."/>
            <person name="Wada T."/>
            <person name="Watanabe A."/>
            <person name="Yamada M."/>
            <person name="Yasuda M."/>
            <person name="Tabata S."/>
        </authorList>
    </citation>
    <scope>NUCLEOTIDE SEQUENCE [LARGE SCALE GENOMIC DNA]</scope>
    <source>
        <strain>ATCC 27184 / PCC 6803 / Kazusa</strain>
    </source>
</reference>
<reference key="2">
    <citation type="journal article" date="1997" name="Electrophoresis">
        <title>Towards a proteome project of cyanobacterium Synechocystis sp. strain PCC6803: linking 130 protein spots with their respective genes.</title>
        <authorList>
            <person name="Sazuka T."/>
            <person name="Ohara O."/>
        </authorList>
    </citation>
    <scope>PROTEIN SEQUENCE OF 21-40</scope>
</reference>
<comment type="similarity">
    <text evidence="1">Belongs to the UPF0045 family.</text>
</comment>
<evidence type="ECO:0000305" key="1"/>
<feature type="chain" id="PRO_0000147625" description="UPF0045 protein sll0230">
    <location>
        <begin position="1"/>
        <end position="121"/>
    </location>
</feature>